<accession>A8IDZ2</accession>
<reference key="1">
    <citation type="submission" date="2007-04" db="EMBL/GenBank/DDBJ databases">
        <title>Complete genome sequence of the nitrogen-fixing bacterium Azorhizobium caulinodans ORS571.</title>
        <authorList>
            <person name="Lee K.B."/>
            <person name="Backer P.D."/>
            <person name="Aono T."/>
            <person name="Liu C.T."/>
            <person name="Suzuki S."/>
            <person name="Suzuki T."/>
            <person name="Kaneko T."/>
            <person name="Yamada M."/>
            <person name="Tabata S."/>
            <person name="Kupfer D.M."/>
            <person name="Najar F.Z."/>
            <person name="Wiley G.B."/>
            <person name="Roe B."/>
            <person name="Binnewies T."/>
            <person name="Ussery D."/>
            <person name="Vereecke D."/>
            <person name="Gevers D."/>
            <person name="Holsters M."/>
            <person name="Oyaizu H."/>
        </authorList>
    </citation>
    <scope>NUCLEOTIDE SEQUENCE [LARGE SCALE GENOMIC DNA]</scope>
    <source>
        <strain>ATCC 43989 / DSM 5975 / JCM 20966 / LMG 6465 / NBRC 14845 / NCIMB 13405 / ORS 571</strain>
    </source>
</reference>
<feature type="chain" id="PRO_0000321968" description="C4-dicarboxylate transport protein">
    <location>
        <begin position="1"/>
        <end position="446"/>
    </location>
</feature>
<feature type="transmembrane region" description="Helical" evidence="1">
    <location>
        <begin position="20"/>
        <end position="40"/>
    </location>
</feature>
<feature type="transmembrane region" description="Helical" evidence="1">
    <location>
        <begin position="56"/>
        <end position="76"/>
    </location>
</feature>
<feature type="transmembrane region" description="Helical" evidence="1">
    <location>
        <begin position="91"/>
        <end position="111"/>
    </location>
</feature>
<feature type="transmembrane region" description="Helical" evidence="1">
    <location>
        <begin position="160"/>
        <end position="180"/>
    </location>
</feature>
<feature type="transmembrane region" description="Helical" evidence="1">
    <location>
        <begin position="200"/>
        <end position="220"/>
    </location>
</feature>
<feature type="transmembrane region" description="Helical" evidence="1">
    <location>
        <begin position="233"/>
        <end position="253"/>
    </location>
</feature>
<feature type="transmembrane region" description="Helical" evidence="1">
    <location>
        <begin position="319"/>
        <end position="339"/>
    </location>
</feature>
<feature type="transmembrane region" description="Helical" evidence="1">
    <location>
        <begin position="344"/>
        <end position="364"/>
    </location>
</feature>
<feature type="transmembrane region" description="Helical" evidence="1">
    <location>
        <begin position="367"/>
        <end position="387"/>
    </location>
</feature>
<proteinExistence type="inferred from homology"/>
<name>DCTA_AZOC5</name>
<sequence>MAPVIPAASAPHKPRKFYQHLYVQVLAAIAIGILLGHFYPDLGTQMKPLGDAFIKLVKMVIAPVIFLTVVTGIAGMRDLAKVGRVAGKAMIYFLTFSTLALIIGLIIANVVQPGAGMHIAPASLDPKAVASYAAKAHDASIIGFLMNIIPDTPISALGSGDILQVLFFSVLFGIALAGVGDRGEPVMNVLVSASQAMFRLVHILMKAAPIGAFGAMAFTIGRYGIGSVANLAFLILTFYITSFLFVVVVLGLVARYNGFSIFALLRYIKEELLLVLGTSSSEAALPSLIEKMERAGCRKSVVGLVIPTGYSFNLDGTNIYMTLAALFIAQATDIHLSLGDQILLLLVAMLSSKGAAGITGAGFITLAATLSVVPTVPLAGMALILGIDRFMSECRAITNFIGNAVATIVVARWEGELDKDKLAAALSGRISVEDDDLPIEATSPAQ</sequence>
<keyword id="KW-0997">Cell inner membrane</keyword>
<keyword id="KW-1003">Cell membrane</keyword>
<keyword id="KW-0472">Membrane</keyword>
<keyword id="KW-1185">Reference proteome</keyword>
<keyword id="KW-0769">Symport</keyword>
<keyword id="KW-0812">Transmembrane</keyword>
<keyword id="KW-1133">Transmembrane helix</keyword>
<keyword id="KW-0813">Transport</keyword>
<organism>
    <name type="scientific">Azorhizobium caulinodans (strain ATCC 43989 / DSM 5975 / JCM 20966 / LMG 6465 / NBRC 14845 / NCIMB 13405 / ORS 571)</name>
    <dbReference type="NCBI Taxonomy" id="438753"/>
    <lineage>
        <taxon>Bacteria</taxon>
        <taxon>Pseudomonadati</taxon>
        <taxon>Pseudomonadota</taxon>
        <taxon>Alphaproteobacteria</taxon>
        <taxon>Hyphomicrobiales</taxon>
        <taxon>Xanthobacteraceae</taxon>
        <taxon>Azorhizobium</taxon>
    </lineage>
</organism>
<evidence type="ECO:0000255" key="1">
    <source>
        <dbReference type="HAMAP-Rule" id="MF_01300"/>
    </source>
</evidence>
<comment type="function">
    <text evidence="1">Responsible for the transport of dicarboxylates such as succinate, fumarate, and malate from the periplasm across the membrane.</text>
</comment>
<comment type="subcellular location">
    <subcellularLocation>
        <location evidence="1">Cell inner membrane</location>
        <topology evidence="1">Multi-pass membrane protein</topology>
    </subcellularLocation>
</comment>
<comment type="similarity">
    <text evidence="1">Belongs to the dicarboxylate/amino acid:cation symporter (DAACS) (TC 2.A.23) family.</text>
</comment>
<gene>
    <name evidence="1" type="primary">dctA</name>
    <name type="ordered locus">AZC_3014</name>
</gene>
<protein>
    <recommendedName>
        <fullName evidence="1">C4-dicarboxylate transport protein</fullName>
    </recommendedName>
</protein>
<dbReference type="EMBL" id="AP009384">
    <property type="protein sequence ID" value="BAF89012.1"/>
    <property type="molecule type" value="Genomic_DNA"/>
</dbReference>
<dbReference type="RefSeq" id="WP_012171538.1">
    <property type="nucleotide sequence ID" value="NC_009937.1"/>
</dbReference>
<dbReference type="SMR" id="A8IDZ2"/>
<dbReference type="STRING" id="438753.AZC_3014"/>
<dbReference type="KEGG" id="azc:AZC_3014"/>
<dbReference type="eggNOG" id="COG1301">
    <property type="taxonomic scope" value="Bacteria"/>
</dbReference>
<dbReference type="HOGENOM" id="CLU_019375_7_0_5"/>
<dbReference type="Proteomes" id="UP000000270">
    <property type="component" value="Chromosome"/>
</dbReference>
<dbReference type="GO" id="GO:0005886">
    <property type="term" value="C:plasma membrane"/>
    <property type="evidence" value="ECO:0007669"/>
    <property type="project" value="UniProtKB-SubCell"/>
</dbReference>
<dbReference type="GO" id="GO:0015138">
    <property type="term" value="F:fumarate transmembrane transporter activity"/>
    <property type="evidence" value="ECO:0007669"/>
    <property type="project" value="TreeGrafter"/>
</dbReference>
<dbReference type="GO" id="GO:0015366">
    <property type="term" value="F:malate:proton symporter activity"/>
    <property type="evidence" value="ECO:0007669"/>
    <property type="project" value="TreeGrafter"/>
</dbReference>
<dbReference type="GO" id="GO:0015141">
    <property type="term" value="F:succinate transmembrane transporter activity"/>
    <property type="evidence" value="ECO:0007669"/>
    <property type="project" value="TreeGrafter"/>
</dbReference>
<dbReference type="GO" id="GO:0070778">
    <property type="term" value="P:L-aspartate transmembrane transport"/>
    <property type="evidence" value="ECO:0007669"/>
    <property type="project" value="TreeGrafter"/>
</dbReference>
<dbReference type="FunFam" id="1.10.3860.10:FF:000001">
    <property type="entry name" value="C4-dicarboxylate transport protein"/>
    <property type="match status" value="1"/>
</dbReference>
<dbReference type="Gene3D" id="1.10.3860.10">
    <property type="entry name" value="Sodium:dicarboxylate symporter"/>
    <property type="match status" value="1"/>
</dbReference>
<dbReference type="HAMAP" id="MF_01300">
    <property type="entry name" value="C4_dicarb_transport"/>
    <property type="match status" value="1"/>
</dbReference>
<dbReference type="InterPro" id="IPR023954">
    <property type="entry name" value="C4_dicarb_transport"/>
</dbReference>
<dbReference type="InterPro" id="IPR001991">
    <property type="entry name" value="Na-dicarboxylate_symporter"/>
</dbReference>
<dbReference type="InterPro" id="IPR018107">
    <property type="entry name" value="Na-dicarboxylate_symporter_CS"/>
</dbReference>
<dbReference type="InterPro" id="IPR036458">
    <property type="entry name" value="Na:dicarbo_symporter_sf"/>
</dbReference>
<dbReference type="NCBIfam" id="NF002461">
    <property type="entry name" value="PRK01663.1"/>
    <property type="match status" value="1"/>
</dbReference>
<dbReference type="NCBIfam" id="NF009587">
    <property type="entry name" value="PRK13027.1"/>
    <property type="match status" value="1"/>
</dbReference>
<dbReference type="PANTHER" id="PTHR42865:SF1">
    <property type="entry name" value="AEROBIC C4-DICARBOXYLATE TRANSPORT PROTEIN"/>
    <property type="match status" value="1"/>
</dbReference>
<dbReference type="PANTHER" id="PTHR42865">
    <property type="entry name" value="PROTON/GLUTAMATE-ASPARTATE SYMPORTER"/>
    <property type="match status" value="1"/>
</dbReference>
<dbReference type="Pfam" id="PF00375">
    <property type="entry name" value="SDF"/>
    <property type="match status" value="1"/>
</dbReference>
<dbReference type="PRINTS" id="PR00173">
    <property type="entry name" value="EDTRNSPORT"/>
</dbReference>
<dbReference type="SUPFAM" id="SSF118215">
    <property type="entry name" value="Proton glutamate symport protein"/>
    <property type="match status" value="1"/>
</dbReference>
<dbReference type="PROSITE" id="PS00713">
    <property type="entry name" value="NA_DICARBOXYL_SYMP_1"/>
    <property type="match status" value="1"/>
</dbReference>
<dbReference type="PROSITE" id="PS00714">
    <property type="entry name" value="NA_DICARBOXYL_SYMP_2"/>
    <property type="match status" value="1"/>
</dbReference>